<dbReference type="EC" id="1.11.1.24" evidence="2"/>
<dbReference type="EMBL" id="AF106945">
    <property type="protein sequence ID" value="AAD17993.1"/>
    <property type="molecule type" value="mRNA"/>
</dbReference>
<dbReference type="EMBL" id="BC059122">
    <property type="protein sequence ID" value="AAH59122.1"/>
    <property type="molecule type" value="mRNA"/>
</dbReference>
<dbReference type="RefSeq" id="NP_445964.1">
    <property type="nucleotide sequence ID" value="NM_053512.2"/>
</dbReference>
<dbReference type="SMR" id="Q9Z0V5"/>
<dbReference type="BioGRID" id="250078">
    <property type="interactions" value="1"/>
</dbReference>
<dbReference type="FunCoup" id="Q9Z0V5">
    <property type="interactions" value="1271"/>
</dbReference>
<dbReference type="IntAct" id="Q9Z0V5">
    <property type="interactions" value="2"/>
</dbReference>
<dbReference type="STRING" id="10116.ENSRNOP00000005014"/>
<dbReference type="PeroxiBase" id="4533">
    <property type="entry name" value="Rno2CysPrx04"/>
</dbReference>
<dbReference type="CarbonylDB" id="Q9Z0V5"/>
<dbReference type="iPTMnet" id="Q9Z0V5"/>
<dbReference type="PhosphoSitePlus" id="Q9Z0V5"/>
<dbReference type="jPOST" id="Q9Z0V5"/>
<dbReference type="PaxDb" id="10116-ENSRNOP00000005014"/>
<dbReference type="GeneID" id="85274"/>
<dbReference type="KEGG" id="rno:85274"/>
<dbReference type="AGR" id="RGD:620043"/>
<dbReference type="CTD" id="10549"/>
<dbReference type="RGD" id="620043">
    <property type="gene designation" value="Prdx4"/>
</dbReference>
<dbReference type="VEuPathDB" id="HostDB:ENSRNOG00000003763"/>
<dbReference type="eggNOG" id="KOG0852">
    <property type="taxonomic scope" value="Eukaryota"/>
</dbReference>
<dbReference type="HOGENOM" id="CLU_042529_21_1_1"/>
<dbReference type="InParanoid" id="Q9Z0V5"/>
<dbReference type="PhylomeDB" id="Q9Z0V5"/>
<dbReference type="TreeFam" id="TF105181"/>
<dbReference type="BRENDA" id="1.11.1.24">
    <property type="organism ID" value="5301"/>
</dbReference>
<dbReference type="Reactome" id="R-RNO-6798695">
    <property type="pathway name" value="Neutrophil degranulation"/>
</dbReference>
<dbReference type="PRO" id="PR:Q9Z0V5"/>
<dbReference type="Proteomes" id="UP000002494">
    <property type="component" value="Chromosome X"/>
</dbReference>
<dbReference type="Bgee" id="ENSRNOG00000003763">
    <property type="expression patterns" value="Expressed in pancreas and 20 other cell types or tissues"/>
</dbReference>
<dbReference type="GO" id="GO:0005737">
    <property type="term" value="C:cytoplasm"/>
    <property type="evidence" value="ECO:0000266"/>
    <property type="project" value="RGD"/>
</dbReference>
<dbReference type="GO" id="GO:0005829">
    <property type="term" value="C:cytosol"/>
    <property type="evidence" value="ECO:0000266"/>
    <property type="project" value="RGD"/>
</dbReference>
<dbReference type="GO" id="GO:0005783">
    <property type="term" value="C:endoplasmic reticulum"/>
    <property type="evidence" value="ECO:0000266"/>
    <property type="project" value="RGD"/>
</dbReference>
<dbReference type="GO" id="GO:0005615">
    <property type="term" value="C:extracellular space"/>
    <property type="evidence" value="ECO:0000314"/>
    <property type="project" value="RGD"/>
</dbReference>
<dbReference type="GO" id="GO:0005790">
    <property type="term" value="C:smooth endoplasmic reticulum"/>
    <property type="evidence" value="ECO:0000314"/>
    <property type="project" value="UniProtKB"/>
</dbReference>
<dbReference type="GO" id="GO:0042802">
    <property type="term" value="F:identical protein binding"/>
    <property type="evidence" value="ECO:0000266"/>
    <property type="project" value="RGD"/>
</dbReference>
<dbReference type="GO" id="GO:0060090">
    <property type="term" value="F:molecular adaptor activity"/>
    <property type="evidence" value="ECO:0000266"/>
    <property type="project" value="RGD"/>
</dbReference>
<dbReference type="GO" id="GO:0140313">
    <property type="term" value="F:molecular sequestering activity"/>
    <property type="evidence" value="ECO:0000266"/>
    <property type="project" value="RGD"/>
</dbReference>
<dbReference type="GO" id="GO:0008379">
    <property type="term" value="F:thioredoxin peroxidase activity"/>
    <property type="evidence" value="ECO:0000318"/>
    <property type="project" value="GO_Central"/>
</dbReference>
<dbReference type="GO" id="GO:0045454">
    <property type="term" value="P:cell redox homeostasis"/>
    <property type="evidence" value="ECO:0000266"/>
    <property type="project" value="RGD"/>
</dbReference>
<dbReference type="GO" id="GO:0030198">
    <property type="term" value="P:extracellular matrix organization"/>
    <property type="evidence" value="ECO:0000266"/>
    <property type="project" value="RGD"/>
</dbReference>
<dbReference type="GO" id="GO:0042744">
    <property type="term" value="P:hydrogen peroxide catabolic process"/>
    <property type="evidence" value="ECO:0000318"/>
    <property type="project" value="GO_Central"/>
</dbReference>
<dbReference type="GO" id="GO:0008584">
    <property type="term" value="P:male gonad development"/>
    <property type="evidence" value="ECO:0000266"/>
    <property type="project" value="RGD"/>
</dbReference>
<dbReference type="GO" id="GO:2000255">
    <property type="term" value="P:negative regulation of male germ cell proliferation"/>
    <property type="evidence" value="ECO:0000266"/>
    <property type="project" value="RGD"/>
</dbReference>
<dbReference type="GO" id="GO:0072593">
    <property type="term" value="P:reactive oxygen species metabolic process"/>
    <property type="evidence" value="ECO:0000266"/>
    <property type="project" value="RGD"/>
</dbReference>
<dbReference type="GO" id="GO:0006979">
    <property type="term" value="P:response to oxidative stress"/>
    <property type="evidence" value="ECO:0000266"/>
    <property type="project" value="RGD"/>
</dbReference>
<dbReference type="GO" id="GO:0007283">
    <property type="term" value="P:spermatogenesis"/>
    <property type="evidence" value="ECO:0000266"/>
    <property type="project" value="RGD"/>
</dbReference>
<dbReference type="CDD" id="cd03015">
    <property type="entry name" value="PRX_Typ2cys"/>
    <property type="match status" value="1"/>
</dbReference>
<dbReference type="FunFam" id="3.40.30.10:FF:000003">
    <property type="entry name" value="Peroxiredoxin 1"/>
    <property type="match status" value="1"/>
</dbReference>
<dbReference type="Gene3D" id="3.40.30.10">
    <property type="entry name" value="Glutaredoxin"/>
    <property type="match status" value="1"/>
</dbReference>
<dbReference type="InterPro" id="IPR000866">
    <property type="entry name" value="AhpC/TSA"/>
</dbReference>
<dbReference type="InterPro" id="IPR050217">
    <property type="entry name" value="Peroxiredoxin"/>
</dbReference>
<dbReference type="InterPro" id="IPR019479">
    <property type="entry name" value="Peroxiredoxin_C"/>
</dbReference>
<dbReference type="InterPro" id="IPR036249">
    <property type="entry name" value="Thioredoxin-like_sf"/>
</dbReference>
<dbReference type="InterPro" id="IPR013766">
    <property type="entry name" value="Thioredoxin_domain"/>
</dbReference>
<dbReference type="PANTHER" id="PTHR10681:SF173">
    <property type="entry name" value="PEROXIREDOXIN-4"/>
    <property type="match status" value="1"/>
</dbReference>
<dbReference type="PANTHER" id="PTHR10681">
    <property type="entry name" value="THIOREDOXIN PEROXIDASE"/>
    <property type="match status" value="1"/>
</dbReference>
<dbReference type="Pfam" id="PF10417">
    <property type="entry name" value="1-cysPrx_C"/>
    <property type="match status" value="1"/>
</dbReference>
<dbReference type="Pfam" id="PF00578">
    <property type="entry name" value="AhpC-TSA"/>
    <property type="match status" value="1"/>
</dbReference>
<dbReference type="SUPFAM" id="SSF52833">
    <property type="entry name" value="Thioredoxin-like"/>
    <property type="match status" value="1"/>
</dbReference>
<dbReference type="PROSITE" id="PS51352">
    <property type="entry name" value="THIOREDOXIN_2"/>
    <property type="match status" value="1"/>
</dbReference>
<sequence length="273" mass="31007">METWSKLLDGTTPSRRWRKLVLLLPPLLLFLLQTEALQGLESDDRFRTRENECHFYAGGQVYPGEVSRVSVADHSLHLSKAKISKPAPYWEGTAVINGEFKELKLTDYRGKYLVFFFYPLDFTFVCPTEIIAFGDRIEEFKSINTEVVACSVDSQFTHLAWINTPRRQGGLGPIRIPLLSDLNHQISKDYGVYLEDSGHTLRGLFIIDDKGVLRQITLNDLPVGRSVDETLRLVQAFQYTDKHGEVCPAGWKPGSETIIPDPAGKLKYFDKLN</sequence>
<feature type="signal peptide" evidence="1">
    <location>
        <begin position="1"/>
        <end position="40"/>
    </location>
</feature>
<feature type="chain" id="PRO_0000390877" description="Peroxiredoxin-4">
    <location>
        <begin position="41"/>
        <end position="273"/>
    </location>
</feature>
<feature type="domain" description="Thioredoxin" evidence="3">
    <location>
        <begin position="81"/>
        <end position="239"/>
    </location>
</feature>
<feature type="active site" description="Cysteine sulfenic acid (-SOH) intermediate" evidence="2">
    <location>
        <position position="126"/>
    </location>
</feature>
<feature type="disulfide bond" description="Interchain (with C-247); in linked form" evidence="2">
    <location>
        <position position="126"/>
    </location>
</feature>
<feature type="disulfide bond" description="Interchain (with C-126); in linked form" evidence="2">
    <location>
        <position position="247"/>
    </location>
</feature>
<keyword id="KW-0049">Antioxidant</keyword>
<keyword id="KW-0963">Cytoplasm</keyword>
<keyword id="KW-1015">Disulfide bond</keyword>
<keyword id="KW-0256">Endoplasmic reticulum</keyword>
<keyword id="KW-0560">Oxidoreductase</keyword>
<keyword id="KW-0575">Peroxidase</keyword>
<keyword id="KW-0676">Redox-active center</keyword>
<keyword id="KW-1185">Reference proteome</keyword>
<keyword id="KW-0964">Secreted</keyword>
<keyword id="KW-0732">Signal</keyword>
<name>PRDX4_RAT</name>
<evidence type="ECO:0000250" key="1"/>
<evidence type="ECO:0000250" key="2">
    <source>
        <dbReference type="UniProtKB" id="Q13162"/>
    </source>
</evidence>
<evidence type="ECO:0000255" key="3">
    <source>
        <dbReference type="PROSITE-ProRule" id="PRU00691"/>
    </source>
</evidence>
<evidence type="ECO:0000269" key="4">
    <source>
    </source>
</evidence>
<evidence type="ECO:0000269" key="5">
    <source>
    </source>
</evidence>
<evidence type="ECO:0000305" key="6"/>
<gene>
    <name type="primary">Prdx4</name>
    <name type="synonym">Rno2CysPrx04</name>
</gene>
<organism>
    <name type="scientific">Rattus norvegicus</name>
    <name type="common">Rat</name>
    <dbReference type="NCBI Taxonomy" id="10116"/>
    <lineage>
        <taxon>Eukaryota</taxon>
        <taxon>Metazoa</taxon>
        <taxon>Chordata</taxon>
        <taxon>Craniata</taxon>
        <taxon>Vertebrata</taxon>
        <taxon>Euteleostomi</taxon>
        <taxon>Mammalia</taxon>
        <taxon>Eutheria</taxon>
        <taxon>Euarchontoglires</taxon>
        <taxon>Glires</taxon>
        <taxon>Rodentia</taxon>
        <taxon>Myomorpha</taxon>
        <taxon>Muroidea</taxon>
        <taxon>Muridae</taxon>
        <taxon>Murinae</taxon>
        <taxon>Rattus</taxon>
    </lineage>
</organism>
<comment type="function">
    <text evidence="2">Thiol-specific peroxidase that catalyzes the reduction of hydrogen peroxide and organic hydroperoxides to water and alcohols, respectively. Plays a role in cell protection against oxidative stress by detoxifying peroxides and as sensor of hydrogen peroxide-mediated signaling events. Regulates the activation of NF-kappa-B in the cytosol by a modulation of I-kappa-B-alpha phosphorylation.</text>
</comment>
<comment type="catalytic activity">
    <reaction evidence="2">
        <text>a hydroperoxide + [thioredoxin]-dithiol = an alcohol + [thioredoxin]-disulfide + H2O</text>
        <dbReference type="Rhea" id="RHEA:62620"/>
        <dbReference type="Rhea" id="RHEA-COMP:10698"/>
        <dbReference type="Rhea" id="RHEA-COMP:10700"/>
        <dbReference type="ChEBI" id="CHEBI:15377"/>
        <dbReference type="ChEBI" id="CHEBI:29950"/>
        <dbReference type="ChEBI" id="CHEBI:30879"/>
        <dbReference type="ChEBI" id="CHEBI:35924"/>
        <dbReference type="ChEBI" id="CHEBI:50058"/>
        <dbReference type="EC" id="1.11.1.24"/>
    </reaction>
</comment>
<comment type="subunit">
    <text evidence="2">Homodimer; disulfide-linked, upon oxidation. 5 homodimers assemble to form a ring-like decamer.</text>
</comment>
<comment type="subcellular location">
    <subcellularLocation>
        <location evidence="2">Cytoplasm</location>
    </subcellularLocation>
    <subcellularLocation>
        <location evidence="2">Endoplasmic reticulum</location>
    </subcellularLocation>
    <subcellularLocation>
        <location evidence="4 5">Secreted</location>
    </subcellularLocation>
</comment>
<comment type="PTM">
    <text evidence="2">The enzyme can be inactivated by further oxidation of the cysteine sulfenic acid (C(P)-SOH) to sulphinic acid (C(P)-SO2H) and sulphonic acid (C(P)-SO3H) instead of its condensation to a disulfide bond.</text>
</comment>
<comment type="miscellaneous">
    <text evidence="2">The active site is a conserved redox-active cysteine residue, the peroxidatic cysteine (C(P)), which makes the nucleophilic attack on the peroxide substrate. The peroxide oxidizes the C(P)-SH to cysteine sulfenic acid (C(P)-SOH), which then reacts with another cysteine residue, the resolving cysteine (C(R)), to form a disulfide bridge. The disulfide is subsequently reduced by an appropriate electron donor to complete the catalytic cycle. In this typical 2-Cys peroxiredoxin, C(R) is provided by the other dimeric subunit to form an intersubunit disulfide. The disulfide is subsequently reduced by thioredoxin.</text>
</comment>
<comment type="similarity">
    <text evidence="6">Belongs to the peroxiredoxin family. AhpC/Prx1 subfamily.</text>
</comment>
<accession>Q9Z0V5</accession>
<protein>
    <recommendedName>
        <fullName>Peroxiredoxin-4</fullName>
        <ecNumber evidence="2">1.11.1.24</ecNumber>
    </recommendedName>
    <alternativeName>
        <fullName>Antioxidant enzyme AOE372</fullName>
    </alternativeName>
    <alternativeName>
        <fullName>Peroxiredoxin IV</fullName>
        <shortName>Prx-IV</shortName>
    </alternativeName>
    <alternativeName>
        <fullName>Thioredoxin peroxidase AO372</fullName>
    </alternativeName>
    <alternativeName>
        <fullName>Thioredoxin-dependent peroxide reductase A0372</fullName>
    </alternativeName>
    <alternativeName>
        <fullName evidence="6">Thioredoxin-dependent peroxiredoxin 4</fullName>
    </alternativeName>
</protein>
<reference key="1">
    <citation type="journal article" date="1999" name="FEBS Lett.">
        <title>Cloning of the peroxiredoxin gene family in rats and characterization of the fourth member.</title>
        <authorList>
            <person name="Matsumoto A."/>
            <person name="Okado A."/>
            <person name="Fujii T."/>
            <person name="Fujii J."/>
            <person name="Egashira M."/>
            <person name="Niikawa N."/>
            <person name="Taniguchi N."/>
        </authorList>
    </citation>
    <scope>NUCLEOTIDE SEQUENCE [MRNA]</scope>
    <scope>SUBCELLULAR LOCATION</scope>
</reference>
<reference key="2">
    <citation type="journal article" date="2004" name="Genome Res.">
        <title>The status, quality, and expansion of the NIH full-length cDNA project: the Mammalian Gene Collection (MGC).</title>
        <authorList>
            <consortium name="The MGC Project Team"/>
        </authorList>
    </citation>
    <scope>NUCLEOTIDE SEQUENCE [LARGE SCALE MRNA]</scope>
    <source>
        <tissue>Pituitary</tissue>
    </source>
</reference>
<reference key="3">
    <citation type="journal article" date="2000" name="J. Biochem.">
        <title>Peroxiredoxin IV is a secretable protein with heparin-binding properties under reduced conditions.</title>
        <authorList>
            <person name="Okado-Matsumoto A."/>
            <person name="Matsumoto A."/>
            <person name="Fujii J."/>
            <person name="Taniguchi N."/>
        </authorList>
    </citation>
    <scope>FUNCTION</scope>
    <scope>SUBCELLULAR LOCATION</scope>
</reference>
<proteinExistence type="evidence at transcript level"/>